<reference key="1">
    <citation type="journal article" date="2004" name="Science">
        <title>The Ashbya gossypii genome as a tool for mapping the ancient Saccharomyces cerevisiae genome.</title>
        <authorList>
            <person name="Dietrich F.S."/>
            <person name="Voegeli S."/>
            <person name="Brachat S."/>
            <person name="Lerch A."/>
            <person name="Gates K."/>
            <person name="Steiner S."/>
            <person name="Mohr C."/>
            <person name="Poehlmann R."/>
            <person name="Luedi P."/>
            <person name="Choi S."/>
            <person name="Wing R.A."/>
            <person name="Flavier A."/>
            <person name="Gaffney T.D."/>
            <person name="Philippsen P."/>
        </authorList>
    </citation>
    <scope>NUCLEOTIDE SEQUENCE [LARGE SCALE GENOMIC DNA]</scope>
    <source>
        <strain>ATCC 10895 / CBS 109.51 / FGSC 9923 / NRRL Y-1056</strain>
    </source>
</reference>
<reference key="2">
    <citation type="journal article" date="2013" name="G3 (Bethesda)">
        <title>Genomes of Ashbya fungi isolated from insects reveal four mating-type loci, numerous translocations, lack of transposons, and distinct gene duplications.</title>
        <authorList>
            <person name="Dietrich F.S."/>
            <person name="Voegeli S."/>
            <person name="Kuo S."/>
            <person name="Philippsen P."/>
        </authorList>
    </citation>
    <scope>GENOME REANNOTATION</scope>
    <source>
        <strain>ATCC 10895 / CBS 109.51 / FGSC 9923 / NRRL Y-1056</strain>
    </source>
</reference>
<accession>Q757Q6</accession>
<keyword id="KW-0963">Cytoplasm</keyword>
<keyword id="KW-0320">Glycogen biosynthesis</keyword>
<keyword id="KW-0328">Glycosyltransferase</keyword>
<keyword id="KW-1185">Reference proteome</keyword>
<keyword id="KW-0808">Transferase</keyword>
<comment type="function">
    <text evidence="2">Glycogen-branching enzyme participates in the glycogen biosynthetic process along with glycogenin and glycogen synthase. Generates alpha-1,6-glucosidic branches from alpha-1,4-linked glucose chains, to increase solubility of the glycogen polymer.</text>
</comment>
<comment type="catalytic activity">
    <reaction evidence="2">
        <text>Transfers a segment of a (1-&gt;4)-alpha-D-glucan chain to a primary hydroxy group in a similar glucan chain.</text>
        <dbReference type="EC" id="2.4.1.18"/>
    </reaction>
</comment>
<comment type="pathway">
    <text evidence="2">Glycan biosynthesis; glycogen biosynthesis.</text>
</comment>
<comment type="subcellular location">
    <subcellularLocation>
        <location evidence="1">Cytoplasm</location>
    </subcellularLocation>
    <text evidence="1">Localizes to glycogen granules in the cytoplasm.</text>
</comment>
<comment type="similarity">
    <text evidence="4">Belongs to the glycosyl hydrolase 13 family. GlgB subfamily.</text>
</comment>
<proteinExistence type="inferred from homology"/>
<sequence>MAGVPDNVKGVVELDPWLAPYGDILSARRFLADKWRHDIEHAVPGGRRSLVEFARDAYKSYGLHADAQSKSITYREWAPNATRAFLVGDFNGWDETSHELQNKDEFGVFTGVFGPGADGDFMIPHDSRVKVVFELADGSRIHRLPAWIKRATQPSKETAKEWGPSYEARFWNPASPYKFKHERPRLDPNVESLRIYEAHVGISTPEPRVGSYSEFTKDVLPRIRDLGYNAIQLMAIMEHAYYASFGYQVTNFFAVSSRYGTPEELKELIDTAHGMGIQVLLDVVHSHASKNVSDGLNMFDGTDYQYFHSISSGRGEHPLWDSRLFNYGSFEVQRFLLANLAFYIDVYQFDGFRFDGVTSMLYHHHGVGERGAFSGDYNEYLSDHSGVDHEALAYLMLANDLIHDMLPANGVTVAEDVSGYPTLCLPRSVGGCGFDYRLAMALPDMWIKLLKESKDEDWSMGHIVYTLVNRRYKEKVVAYAESHDQALVGDKTLAFWMMDAAMYTDMTVLKELTPVVDRGIALHKLIRLITHSLGGESYLNFEGNEFGHPEWLDFPNANNGDSYQYARRQFNLVDDGLLRYKHLYAFDKAMQEAEGKHKWLNTPQAYVSLKHETDKVISFERNGLVFIFNFHPTQSFTDYRIGVDEAGAYRIILNSDREEFGGHRRIEEENSVFHTTDLEWNGRRNFIQVYLPSRTALVLARNP</sequence>
<feature type="chain" id="PRO_0000188777" description="1,4-alpha-glucan-branching enzyme">
    <location>
        <begin position="1"/>
        <end position="703"/>
    </location>
</feature>
<feature type="active site" description="Nucleophile" evidence="2">
    <location>
        <position position="355"/>
    </location>
</feature>
<feature type="active site" description="Proton donor" evidence="2">
    <location>
        <position position="415"/>
    </location>
</feature>
<feature type="binding site" evidence="3">
    <location>
        <position position="93"/>
    </location>
    <ligand>
        <name>(1,4-alpha-D-glucosyl)n</name>
        <dbReference type="ChEBI" id="CHEBI:15444"/>
    </ligand>
</feature>
<feature type="binding site" evidence="3">
    <location>
        <position position="130"/>
    </location>
    <ligand>
        <name>(1,4-alpha-D-glucosyl)n</name>
        <dbReference type="ChEBI" id="CHEBI:15444"/>
    </ligand>
</feature>
<feature type="site" description="Transition state stabilizer" evidence="2">
    <location>
        <position position="484"/>
    </location>
</feature>
<evidence type="ECO:0000250" key="1">
    <source>
        <dbReference type="UniProtKB" id="P32775"/>
    </source>
</evidence>
<evidence type="ECO:0000250" key="2">
    <source>
        <dbReference type="UniProtKB" id="Q04446"/>
    </source>
</evidence>
<evidence type="ECO:0000250" key="3">
    <source>
        <dbReference type="UniProtKB" id="Q6FJV0"/>
    </source>
</evidence>
<evidence type="ECO:0000305" key="4"/>
<dbReference type="EC" id="2.4.1.18" evidence="2"/>
<dbReference type="EMBL" id="AE016818">
    <property type="protein sequence ID" value="AAS52641.1"/>
    <property type="molecule type" value="Genomic_DNA"/>
</dbReference>
<dbReference type="RefSeq" id="NP_984817.1">
    <property type="nucleotide sequence ID" value="NM_210171.1"/>
</dbReference>
<dbReference type="SMR" id="Q757Q6"/>
<dbReference type="FunCoup" id="Q757Q6">
    <property type="interactions" value="445"/>
</dbReference>
<dbReference type="STRING" id="284811.Q757Q6"/>
<dbReference type="CAZy" id="CBM48">
    <property type="family name" value="Carbohydrate-Binding Module Family 48"/>
</dbReference>
<dbReference type="CAZy" id="GH13">
    <property type="family name" value="Glycoside Hydrolase Family 13"/>
</dbReference>
<dbReference type="EnsemblFungi" id="AAS52641">
    <property type="protein sequence ID" value="AAS52641"/>
    <property type="gene ID" value="AGOS_AEL044W"/>
</dbReference>
<dbReference type="GeneID" id="4621011"/>
<dbReference type="KEGG" id="ago:AGOS_AEL044W"/>
<dbReference type="eggNOG" id="KOG0470">
    <property type="taxonomic scope" value="Eukaryota"/>
</dbReference>
<dbReference type="HOGENOM" id="CLU_011131_2_2_1"/>
<dbReference type="InParanoid" id="Q757Q6"/>
<dbReference type="OMA" id="YEMHLGS"/>
<dbReference type="OrthoDB" id="196493at2759"/>
<dbReference type="UniPathway" id="UPA00164"/>
<dbReference type="Proteomes" id="UP000000591">
    <property type="component" value="Chromosome V"/>
</dbReference>
<dbReference type="GO" id="GO:0005737">
    <property type="term" value="C:cytoplasm"/>
    <property type="evidence" value="ECO:0000250"/>
    <property type="project" value="UniProtKB"/>
</dbReference>
<dbReference type="GO" id="GO:0003844">
    <property type="term" value="F:1,4-alpha-glucan branching enzyme activity"/>
    <property type="evidence" value="ECO:0000318"/>
    <property type="project" value="GO_Central"/>
</dbReference>
<dbReference type="GO" id="GO:0043169">
    <property type="term" value="F:cation binding"/>
    <property type="evidence" value="ECO:0007669"/>
    <property type="project" value="InterPro"/>
</dbReference>
<dbReference type="GO" id="GO:0004553">
    <property type="term" value="F:hydrolase activity, hydrolyzing O-glycosyl compounds"/>
    <property type="evidence" value="ECO:0007669"/>
    <property type="project" value="InterPro"/>
</dbReference>
<dbReference type="GO" id="GO:0005978">
    <property type="term" value="P:glycogen biosynthetic process"/>
    <property type="evidence" value="ECO:0000318"/>
    <property type="project" value="GO_Central"/>
</dbReference>
<dbReference type="CDD" id="cd11321">
    <property type="entry name" value="AmyAc_bac_euk_BE"/>
    <property type="match status" value="1"/>
</dbReference>
<dbReference type="CDD" id="cd02854">
    <property type="entry name" value="E_set_GBE_euk_N"/>
    <property type="match status" value="1"/>
</dbReference>
<dbReference type="FunFam" id="3.20.20.80:FF:000001">
    <property type="entry name" value="1,4-alpha-glucan branching enzyme"/>
    <property type="match status" value="1"/>
</dbReference>
<dbReference type="FunFam" id="2.60.40.10:FF:001874">
    <property type="entry name" value="1,4-alpha-glucan-branching enzyme"/>
    <property type="match status" value="1"/>
</dbReference>
<dbReference type="FunFam" id="2.60.40.1180:FF:000003">
    <property type="entry name" value="1,4-alpha-glucan-branching enzyme, chloroplastic/amyloplastic"/>
    <property type="match status" value="1"/>
</dbReference>
<dbReference type="Gene3D" id="3.20.20.80">
    <property type="entry name" value="Glycosidases"/>
    <property type="match status" value="1"/>
</dbReference>
<dbReference type="Gene3D" id="2.60.40.1180">
    <property type="entry name" value="Golgi alpha-mannosidase II"/>
    <property type="match status" value="1"/>
</dbReference>
<dbReference type="Gene3D" id="2.60.40.10">
    <property type="entry name" value="Immunoglobulins"/>
    <property type="match status" value="1"/>
</dbReference>
<dbReference type="InterPro" id="IPR006048">
    <property type="entry name" value="A-amylase/branching_C"/>
</dbReference>
<dbReference type="InterPro" id="IPR037439">
    <property type="entry name" value="Branching_enzy"/>
</dbReference>
<dbReference type="InterPro" id="IPR006047">
    <property type="entry name" value="Glyco_hydro_13_cat_dom"/>
</dbReference>
<dbReference type="InterPro" id="IPR004193">
    <property type="entry name" value="Glyco_hydro_13_N"/>
</dbReference>
<dbReference type="InterPro" id="IPR013780">
    <property type="entry name" value="Glyco_hydro_b"/>
</dbReference>
<dbReference type="InterPro" id="IPR017853">
    <property type="entry name" value="Glycoside_hydrolase_SF"/>
</dbReference>
<dbReference type="InterPro" id="IPR013783">
    <property type="entry name" value="Ig-like_fold"/>
</dbReference>
<dbReference type="InterPro" id="IPR014756">
    <property type="entry name" value="Ig_E-set"/>
</dbReference>
<dbReference type="PANTHER" id="PTHR43651">
    <property type="entry name" value="1,4-ALPHA-GLUCAN-BRANCHING ENZYME"/>
    <property type="match status" value="1"/>
</dbReference>
<dbReference type="PANTHER" id="PTHR43651:SF3">
    <property type="entry name" value="1,4-ALPHA-GLUCAN-BRANCHING ENZYME"/>
    <property type="match status" value="1"/>
</dbReference>
<dbReference type="Pfam" id="PF00128">
    <property type="entry name" value="Alpha-amylase"/>
    <property type="match status" value="1"/>
</dbReference>
<dbReference type="Pfam" id="PF02806">
    <property type="entry name" value="Alpha-amylase_C"/>
    <property type="match status" value="1"/>
</dbReference>
<dbReference type="Pfam" id="PF02922">
    <property type="entry name" value="CBM_48"/>
    <property type="match status" value="1"/>
</dbReference>
<dbReference type="PIRSF" id="PIRSF000463">
    <property type="entry name" value="GlgB"/>
    <property type="match status" value="1"/>
</dbReference>
<dbReference type="SMART" id="SM00642">
    <property type="entry name" value="Aamy"/>
    <property type="match status" value="1"/>
</dbReference>
<dbReference type="SUPFAM" id="SSF51445">
    <property type="entry name" value="(Trans)glycosidases"/>
    <property type="match status" value="1"/>
</dbReference>
<dbReference type="SUPFAM" id="SSF81296">
    <property type="entry name" value="E set domains"/>
    <property type="match status" value="1"/>
</dbReference>
<dbReference type="SUPFAM" id="SSF51011">
    <property type="entry name" value="Glycosyl hydrolase domain"/>
    <property type="match status" value="1"/>
</dbReference>
<name>GLGB_EREGS</name>
<organism>
    <name type="scientific">Eremothecium gossypii (strain ATCC 10895 / CBS 109.51 / FGSC 9923 / NRRL Y-1056)</name>
    <name type="common">Yeast</name>
    <name type="synonym">Ashbya gossypii</name>
    <dbReference type="NCBI Taxonomy" id="284811"/>
    <lineage>
        <taxon>Eukaryota</taxon>
        <taxon>Fungi</taxon>
        <taxon>Dikarya</taxon>
        <taxon>Ascomycota</taxon>
        <taxon>Saccharomycotina</taxon>
        <taxon>Saccharomycetes</taxon>
        <taxon>Saccharomycetales</taxon>
        <taxon>Saccharomycetaceae</taxon>
        <taxon>Eremothecium</taxon>
    </lineage>
</organism>
<protein>
    <recommendedName>
        <fullName>1,4-alpha-glucan-branching enzyme</fullName>
        <ecNumber evidence="2">2.4.1.18</ecNumber>
    </recommendedName>
    <alternativeName>
        <fullName>Glycogen-branching enzyme</fullName>
    </alternativeName>
</protein>
<gene>
    <name type="primary">GLC3</name>
    <name type="ordered locus">AEL044W</name>
</gene>